<evidence type="ECO:0000255" key="1">
    <source>
        <dbReference type="HAMAP-Rule" id="MF_00060"/>
    </source>
</evidence>
<comment type="function">
    <text evidence="1">Nucleotidase with a broad substrate specificity as it can dephosphorylate various ribo- and deoxyribonucleoside 5'-monophosphates and ribonucleoside 3'-monophosphates with highest affinity to 3'-AMP. Also hydrolyzes polyphosphate (exopolyphosphatase activity) with the preference for short-chain-length substrates (P20-25). Might be involved in the regulation of dNTP and NTP pools, and in the turnover of 3'-mononucleotides produced by numerous intracellular RNases (T1, T2, and F) during the degradation of various RNAs.</text>
</comment>
<comment type="catalytic activity">
    <reaction evidence="1">
        <text>a ribonucleoside 5'-phosphate + H2O = a ribonucleoside + phosphate</text>
        <dbReference type="Rhea" id="RHEA:12484"/>
        <dbReference type="ChEBI" id="CHEBI:15377"/>
        <dbReference type="ChEBI" id="CHEBI:18254"/>
        <dbReference type="ChEBI" id="CHEBI:43474"/>
        <dbReference type="ChEBI" id="CHEBI:58043"/>
        <dbReference type="EC" id="3.1.3.5"/>
    </reaction>
</comment>
<comment type="catalytic activity">
    <reaction evidence="1">
        <text>a ribonucleoside 3'-phosphate + H2O = a ribonucleoside + phosphate</text>
        <dbReference type="Rhea" id="RHEA:10144"/>
        <dbReference type="ChEBI" id="CHEBI:13197"/>
        <dbReference type="ChEBI" id="CHEBI:15377"/>
        <dbReference type="ChEBI" id="CHEBI:18254"/>
        <dbReference type="ChEBI" id="CHEBI:43474"/>
        <dbReference type="EC" id="3.1.3.6"/>
    </reaction>
</comment>
<comment type="catalytic activity">
    <reaction evidence="1">
        <text>[phosphate](n) + H2O = [phosphate](n-1) + phosphate + H(+)</text>
        <dbReference type="Rhea" id="RHEA:21528"/>
        <dbReference type="Rhea" id="RHEA-COMP:9859"/>
        <dbReference type="Rhea" id="RHEA-COMP:14279"/>
        <dbReference type="ChEBI" id="CHEBI:15377"/>
        <dbReference type="ChEBI" id="CHEBI:15378"/>
        <dbReference type="ChEBI" id="CHEBI:16838"/>
        <dbReference type="ChEBI" id="CHEBI:43474"/>
        <dbReference type="EC" id="3.6.1.11"/>
    </reaction>
</comment>
<comment type="cofactor">
    <cofactor evidence="1">
        <name>a divalent metal cation</name>
        <dbReference type="ChEBI" id="CHEBI:60240"/>
    </cofactor>
    <text evidence="1">Binds 1 divalent metal cation per subunit.</text>
</comment>
<comment type="subcellular location">
    <subcellularLocation>
        <location evidence="1">Cytoplasm</location>
    </subcellularLocation>
</comment>
<comment type="similarity">
    <text evidence="1">Belongs to the SurE nucleotidase family.</text>
</comment>
<proteinExistence type="inferred from homology"/>
<protein>
    <recommendedName>
        <fullName evidence="1">5'/3'-nucleotidase SurE</fullName>
        <ecNumber evidence="1">3.1.3.5</ecNumber>
        <ecNumber evidence="1">3.1.3.6</ecNumber>
    </recommendedName>
    <alternativeName>
        <fullName evidence="1">Exopolyphosphatase</fullName>
        <ecNumber evidence="1">3.6.1.11</ecNumber>
    </alternativeName>
    <alternativeName>
        <fullName evidence="1">Nucleoside monophosphate phosphohydrolase</fullName>
    </alternativeName>
</protein>
<sequence>MRILLSNDDGVHAPGIQTLAKALRKFADVQVVAPDRNRSGASNSLTLESSLRTFTFDNGDIAVQMGTPTDCVYLGVNALMRPRPDIVVSGINAGPNLGDDVIYSGTVAAAMEGRHLGFPALAVSLNGYQHYDTAAAVTCALLRGLSREPLRTGRILNVNVPDLPLAQIKGIRVTRCGSRHPADKVIPQEDPRGNTLYWIGPPGDKYDAGLDTDFAAVDEGYVSVTPLHVDLTAHSAHDVVSDWLDSVGVGTQW</sequence>
<organism>
    <name type="scientific">Salmonella paratyphi A (strain AKU_12601)</name>
    <dbReference type="NCBI Taxonomy" id="554290"/>
    <lineage>
        <taxon>Bacteria</taxon>
        <taxon>Pseudomonadati</taxon>
        <taxon>Pseudomonadota</taxon>
        <taxon>Gammaproteobacteria</taxon>
        <taxon>Enterobacterales</taxon>
        <taxon>Enterobacteriaceae</taxon>
        <taxon>Salmonella</taxon>
    </lineage>
</organism>
<keyword id="KW-0963">Cytoplasm</keyword>
<keyword id="KW-0378">Hydrolase</keyword>
<keyword id="KW-0479">Metal-binding</keyword>
<keyword id="KW-0547">Nucleotide-binding</keyword>
<dbReference type="EC" id="3.1.3.5" evidence="1"/>
<dbReference type="EC" id="3.1.3.6" evidence="1"/>
<dbReference type="EC" id="3.6.1.11" evidence="1"/>
<dbReference type="EMBL" id="FM200053">
    <property type="protein sequence ID" value="CAR60833.1"/>
    <property type="molecule type" value="Genomic_DNA"/>
</dbReference>
<dbReference type="RefSeq" id="WP_001221546.1">
    <property type="nucleotide sequence ID" value="NC_011147.1"/>
</dbReference>
<dbReference type="SMR" id="B5BEY1"/>
<dbReference type="KEGG" id="sek:SSPA2595"/>
<dbReference type="HOGENOM" id="CLU_045192_1_2_6"/>
<dbReference type="Proteomes" id="UP000001869">
    <property type="component" value="Chromosome"/>
</dbReference>
<dbReference type="GO" id="GO:0005737">
    <property type="term" value="C:cytoplasm"/>
    <property type="evidence" value="ECO:0007669"/>
    <property type="project" value="UniProtKB-SubCell"/>
</dbReference>
<dbReference type="GO" id="GO:0008254">
    <property type="term" value="F:3'-nucleotidase activity"/>
    <property type="evidence" value="ECO:0007669"/>
    <property type="project" value="UniProtKB-UniRule"/>
</dbReference>
<dbReference type="GO" id="GO:0008253">
    <property type="term" value="F:5'-nucleotidase activity"/>
    <property type="evidence" value="ECO:0007669"/>
    <property type="project" value="UniProtKB-UniRule"/>
</dbReference>
<dbReference type="GO" id="GO:0004309">
    <property type="term" value="F:exopolyphosphatase activity"/>
    <property type="evidence" value="ECO:0007669"/>
    <property type="project" value="UniProtKB-UniRule"/>
</dbReference>
<dbReference type="GO" id="GO:0046872">
    <property type="term" value="F:metal ion binding"/>
    <property type="evidence" value="ECO:0007669"/>
    <property type="project" value="UniProtKB-UniRule"/>
</dbReference>
<dbReference type="GO" id="GO:0000166">
    <property type="term" value="F:nucleotide binding"/>
    <property type="evidence" value="ECO:0007669"/>
    <property type="project" value="UniProtKB-KW"/>
</dbReference>
<dbReference type="FunFam" id="3.40.1210.10:FF:000001">
    <property type="entry name" value="5'/3'-nucleotidase SurE"/>
    <property type="match status" value="1"/>
</dbReference>
<dbReference type="Gene3D" id="3.40.1210.10">
    <property type="entry name" value="Survival protein SurE-like phosphatase/nucleotidase"/>
    <property type="match status" value="1"/>
</dbReference>
<dbReference type="HAMAP" id="MF_00060">
    <property type="entry name" value="SurE"/>
    <property type="match status" value="1"/>
</dbReference>
<dbReference type="InterPro" id="IPR030048">
    <property type="entry name" value="SurE"/>
</dbReference>
<dbReference type="InterPro" id="IPR002828">
    <property type="entry name" value="SurE-like_Pase/nucleotidase"/>
</dbReference>
<dbReference type="InterPro" id="IPR036523">
    <property type="entry name" value="SurE-like_sf"/>
</dbReference>
<dbReference type="NCBIfam" id="NF001488">
    <property type="entry name" value="PRK00346.1-1"/>
    <property type="match status" value="1"/>
</dbReference>
<dbReference type="NCBIfam" id="NF001489">
    <property type="entry name" value="PRK00346.1-3"/>
    <property type="match status" value="1"/>
</dbReference>
<dbReference type="NCBIfam" id="NF001490">
    <property type="entry name" value="PRK00346.1-4"/>
    <property type="match status" value="1"/>
</dbReference>
<dbReference type="NCBIfam" id="TIGR00087">
    <property type="entry name" value="surE"/>
    <property type="match status" value="1"/>
</dbReference>
<dbReference type="PANTHER" id="PTHR30457">
    <property type="entry name" value="5'-NUCLEOTIDASE SURE"/>
    <property type="match status" value="1"/>
</dbReference>
<dbReference type="PANTHER" id="PTHR30457:SF12">
    <property type="entry name" value="5'_3'-NUCLEOTIDASE SURE"/>
    <property type="match status" value="1"/>
</dbReference>
<dbReference type="Pfam" id="PF01975">
    <property type="entry name" value="SurE"/>
    <property type="match status" value="1"/>
</dbReference>
<dbReference type="SUPFAM" id="SSF64167">
    <property type="entry name" value="SurE-like"/>
    <property type="match status" value="1"/>
</dbReference>
<gene>
    <name evidence="1" type="primary">surE</name>
    <name type="ordered locus">SSPA2595</name>
</gene>
<name>SURE_SALPK</name>
<feature type="chain" id="PRO_1000092035" description="5'/3'-nucleotidase SurE">
    <location>
        <begin position="1"/>
        <end position="253"/>
    </location>
</feature>
<feature type="binding site" evidence="1">
    <location>
        <position position="8"/>
    </location>
    <ligand>
        <name>a divalent metal cation</name>
        <dbReference type="ChEBI" id="CHEBI:60240"/>
    </ligand>
</feature>
<feature type="binding site" evidence="1">
    <location>
        <position position="9"/>
    </location>
    <ligand>
        <name>a divalent metal cation</name>
        <dbReference type="ChEBI" id="CHEBI:60240"/>
    </ligand>
</feature>
<feature type="binding site" evidence="1">
    <location>
        <position position="39"/>
    </location>
    <ligand>
        <name>a divalent metal cation</name>
        <dbReference type="ChEBI" id="CHEBI:60240"/>
    </ligand>
</feature>
<feature type="binding site" evidence="1">
    <location>
        <position position="92"/>
    </location>
    <ligand>
        <name>a divalent metal cation</name>
        <dbReference type="ChEBI" id="CHEBI:60240"/>
    </ligand>
</feature>
<reference key="1">
    <citation type="journal article" date="2009" name="BMC Genomics">
        <title>Pseudogene accumulation in the evolutionary histories of Salmonella enterica serovars Paratyphi A and Typhi.</title>
        <authorList>
            <person name="Holt K.E."/>
            <person name="Thomson N.R."/>
            <person name="Wain J."/>
            <person name="Langridge G.C."/>
            <person name="Hasan R."/>
            <person name="Bhutta Z.A."/>
            <person name="Quail M.A."/>
            <person name="Norbertczak H."/>
            <person name="Walker D."/>
            <person name="Simmonds M."/>
            <person name="White B."/>
            <person name="Bason N."/>
            <person name="Mungall K."/>
            <person name="Dougan G."/>
            <person name="Parkhill J."/>
        </authorList>
    </citation>
    <scope>NUCLEOTIDE SEQUENCE [LARGE SCALE GENOMIC DNA]</scope>
    <source>
        <strain>AKU_12601</strain>
    </source>
</reference>
<accession>B5BEY1</accession>